<comment type="function">
    <text evidence="1">A type II topoisomerase that negatively supercoils closed circular double-stranded (ds) DNA in an ATP-dependent manner to modulate DNA topology and maintain chromosomes in an underwound state. Negative supercoiling favors strand separation, and DNA replication, transcription, recombination and repair, all of which involve strand separation. Also able to catalyze the interconversion of other topological isomers of dsDNA rings, including catenanes and knotted rings. Type II topoisomerases break and join 2 DNA strands simultaneously in an ATP-dependent manner.</text>
</comment>
<comment type="catalytic activity">
    <reaction evidence="2">
        <text>ATP-dependent breakage, passage and rejoining of double-stranded DNA.</text>
        <dbReference type="EC" id="5.6.2.2"/>
    </reaction>
</comment>
<comment type="subunit">
    <text evidence="1">Heterotetramer, composed of two GyrA and two GyrB chains. In the heterotetramer, GyrA contains the active site tyrosine that forms a transient covalent intermediate with DNA, while GyrB binds cofactors and catalyzes ATP hydrolysis.</text>
</comment>
<comment type="subcellular location">
    <subcellularLocation>
        <location evidence="1">Cytoplasm</location>
    </subcellularLocation>
</comment>
<comment type="miscellaneous">
    <text evidence="1">Few gyrases are as efficient as E.coli at forming negative supercoils. Not all organisms have 2 type II topoisomerases; in organisms with a single type II topoisomerase this enzyme also has to decatenate newly replicated chromosomes.</text>
</comment>
<comment type="similarity">
    <text evidence="3">Belongs to the type II topoisomerase GyrB family.</text>
</comment>
<proteinExistence type="inferred from homology"/>
<organism>
    <name type="scientific">Acinetobacter sp. (strain T4)</name>
    <dbReference type="NCBI Taxonomy" id="68996"/>
    <lineage>
        <taxon>Bacteria</taxon>
        <taxon>Pseudomonadati</taxon>
        <taxon>Pseudomonadota</taxon>
        <taxon>Gammaproteobacteria</taxon>
        <taxon>Moraxellales</taxon>
        <taxon>Moraxellaceae</taxon>
        <taxon>Acinetobacter</taxon>
    </lineage>
</organism>
<name>GYRB_ACIS9</name>
<reference key="1">
    <citation type="journal article" date="1996" name="Int. J. Syst. Bacteriol.">
        <title>Phylogenetic analysis of Acinetobacter strains based on the nucleotide sequences of gyrB genes and on the amino acid sequences of their products.</title>
        <authorList>
            <person name="Yamamoto S."/>
            <person name="Harayama S."/>
        </authorList>
    </citation>
    <scope>NUCLEOTIDE SEQUENCE [GENOMIC DNA]</scope>
</reference>
<feature type="chain" id="PRO_0000145288" description="DNA gyrase subunit B">
    <location>
        <begin position="1" status="less than"/>
        <end position="216" status="greater than"/>
    </location>
</feature>
<feature type="domain" description="Toprim" evidence="2">
    <location>
        <begin position="140"/>
        <end position="216" status="greater than"/>
    </location>
</feature>
<feature type="site" description="Interaction with DNA" evidence="2">
    <location>
        <position position="171"/>
    </location>
</feature>
<feature type="site" description="Interaction with DNA" evidence="2">
    <location>
        <position position="174"/>
    </location>
</feature>
<feature type="non-consecutive residues" evidence="3">
    <location>
        <begin position="116"/>
        <end position="117"/>
    </location>
</feature>
<feature type="non-terminal residue">
    <location>
        <position position="1"/>
    </location>
</feature>
<feature type="non-terminal residue">
    <location>
        <position position="216"/>
    </location>
</feature>
<evidence type="ECO:0000250" key="1">
    <source>
        <dbReference type="UniProtKB" id="P0AES6"/>
    </source>
</evidence>
<evidence type="ECO:0000255" key="2">
    <source>
        <dbReference type="PROSITE-ProRule" id="PRU00995"/>
    </source>
</evidence>
<evidence type="ECO:0000305" key="3"/>
<sequence>SYKVSGGLLRVGVSVVNALSKKLHLTIHRAGQIHEQEYAHGDPQYPLKVVGETDTSGTTVRFWPSEWTFSQTIFSVDILARRLRELSFLNAGVRIVLRDERVNLEHIYDYEVGLSEKSALDIAGLPGKLADCQEKDPALSELYLVEGDSAGGSAKQGRNRKMQAILPLKGKILNVERARFDKMISSQEVGTLITALGCGIGREEYNPDKLRYHKII</sequence>
<accession>Q44276</accession>
<accession>Q60168</accession>
<gene>
    <name type="primary">gyrB</name>
</gene>
<dbReference type="EC" id="5.6.2.2" evidence="2"/>
<dbReference type="EMBL" id="D73439">
    <property type="protein sequence ID" value="BAA11164.1"/>
    <property type="molecule type" value="Genomic_DNA"/>
</dbReference>
<dbReference type="EMBL" id="D73424">
    <property type="protein sequence ID" value="BAA11149.1"/>
    <property type="molecule type" value="Genomic_DNA"/>
</dbReference>
<dbReference type="SMR" id="Q44276"/>
<dbReference type="GO" id="GO:0005737">
    <property type="term" value="C:cytoplasm"/>
    <property type="evidence" value="ECO:0007669"/>
    <property type="project" value="UniProtKB-SubCell"/>
</dbReference>
<dbReference type="GO" id="GO:0005524">
    <property type="term" value="F:ATP binding"/>
    <property type="evidence" value="ECO:0007669"/>
    <property type="project" value="UniProtKB-KW"/>
</dbReference>
<dbReference type="GO" id="GO:0003677">
    <property type="term" value="F:DNA binding"/>
    <property type="evidence" value="ECO:0007669"/>
    <property type="project" value="UniProtKB-KW"/>
</dbReference>
<dbReference type="GO" id="GO:0003918">
    <property type="term" value="F:DNA topoisomerase type II (double strand cut, ATP-hydrolyzing) activity"/>
    <property type="evidence" value="ECO:0007669"/>
    <property type="project" value="UniProtKB-EC"/>
</dbReference>
<dbReference type="GO" id="GO:0006265">
    <property type="term" value="P:DNA topological change"/>
    <property type="evidence" value="ECO:0007669"/>
    <property type="project" value="InterPro"/>
</dbReference>
<dbReference type="Gene3D" id="3.40.50.670">
    <property type="match status" value="1"/>
</dbReference>
<dbReference type="Gene3D" id="3.30.565.10">
    <property type="entry name" value="Histidine kinase-like ATPase, C-terminal domain"/>
    <property type="match status" value="1"/>
</dbReference>
<dbReference type="InterPro" id="IPR036890">
    <property type="entry name" value="HATPase_C_sf"/>
</dbReference>
<dbReference type="InterPro" id="IPR001241">
    <property type="entry name" value="Topo_IIA"/>
</dbReference>
<dbReference type="InterPro" id="IPR013760">
    <property type="entry name" value="Topo_IIA-like_dom_sf"/>
</dbReference>
<dbReference type="InterPro" id="IPR000565">
    <property type="entry name" value="Topo_IIA_B"/>
</dbReference>
<dbReference type="InterPro" id="IPR013759">
    <property type="entry name" value="Topo_IIA_B_C"/>
</dbReference>
<dbReference type="InterPro" id="IPR018522">
    <property type="entry name" value="TopoIIA_CS"/>
</dbReference>
<dbReference type="InterPro" id="IPR006171">
    <property type="entry name" value="TOPRIM_dom"/>
</dbReference>
<dbReference type="PANTHER" id="PTHR45866:SF1">
    <property type="entry name" value="DNA GYRASE SUBUNIT B, MITOCHONDRIAL"/>
    <property type="match status" value="1"/>
</dbReference>
<dbReference type="PANTHER" id="PTHR45866">
    <property type="entry name" value="DNA GYRASE/TOPOISOMERASE SUBUNIT B"/>
    <property type="match status" value="1"/>
</dbReference>
<dbReference type="Pfam" id="PF01751">
    <property type="entry name" value="Toprim"/>
    <property type="match status" value="1"/>
</dbReference>
<dbReference type="PRINTS" id="PR01159">
    <property type="entry name" value="DNAGYRASEB"/>
</dbReference>
<dbReference type="SMART" id="SM00433">
    <property type="entry name" value="TOP2c"/>
    <property type="match status" value="1"/>
</dbReference>
<dbReference type="SUPFAM" id="SSF55874">
    <property type="entry name" value="ATPase domain of HSP90 chaperone/DNA topoisomerase II/histidine kinase"/>
    <property type="match status" value="1"/>
</dbReference>
<dbReference type="SUPFAM" id="SSF56719">
    <property type="entry name" value="Type II DNA topoisomerase"/>
    <property type="match status" value="1"/>
</dbReference>
<dbReference type="PROSITE" id="PS00177">
    <property type="entry name" value="TOPOISOMERASE_II"/>
    <property type="match status" value="1"/>
</dbReference>
<dbReference type="PROSITE" id="PS50880">
    <property type="entry name" value="TOPRIM"/>
    <property type="match status" value="1"/>
</dbReference>
<protein>
    <recommendedName>
        <fullName>DNA gyrase subunit B</fullName>
        <ecNumber evidence="2">5.6.2.2</ecNumber>
    </recommendedName>
</protein>
<keyword id="KW-0067">ATP-binding</keyword>
<keyword id="KW-0963">Cytoplasm</keyword>
<keyword id="KW-0238">DNA-binding</keyword>
<keyword id="KW-0413">Isomerase</keyword>
<keyword id="KW-0547">Nucleotide-binding</keyword>
<keyword id="KW-0799">Topoisomerase</keyword>